<name>DSZC_RHOSH</name>
<dbReference type="EC" id="1.14.14.21" evidence="3"/>
<dbReference type="EMBL" id="AY278323">
    <property type="protein sequence ID" value="AAP33510.1"/>
    <property type="molecule type" value="Genomic_DNA"/>
</dbReference>
<dbReference type="RefSeq" id="WP_019750078.1">
    <property type="nucleotide sequence ID" value="NZ_AGCF01000009.1"/>
</dbReference>
<dbReference type="PDB" id="4DOY">
    <property type="method" value="X-ray"/>
    <property type="resolution" value="1.79 A"/>
    <property type="chains" value="A/B/C/D/E/F/G/H=1-417"/>
</dbReference>
<dbReference type="PDBsum" id="4DOY"/>
<dbReference type="SMR" id="Q6WNP1"/>
<dbReference type="BRENDA" id="1.14.14.21">
    <property type="organism ID" value="5397"/>
</dbReference>
<dbReference type="UniPathway" id="UPA00346"/>
<dbReference type="EvolutionaryTrace" id="Q6WNP1"/>
<dbReference type="GO" id="GO:0005737">
    <property type="term" value="C:cytoplasm"/>
    <property type="evidence" value="ECO:0007669"/>
    <property type="project" value="UniProtKB-SubCell"/>
</dbReference>
<dbReference type="GO" id="GO:0008470">
    <property type="term" value="F:3-methylbutanoyl-CoA dehydrogenase activity"/>
    <property type="evidence" value="ECO:0007669"/>
    <property type="project" value="TreeGrafter"/>
</dbReference>
<dbReference type="GO" id="GO:0050660">
    <property type="term" value="F:flavin adenine dinucleotide binding"/>
    <property type="evidence" value="ECO:0007669"/>
    <property type="project" value="InterPro"/>
</dbReference>
<dbReference type="GO" id="GO:0004497">
    <property type="term" value="F:monooxygenase activity"/>
    <property type="evidence" value="ECO:0007669"/>
    <property type="project" value="UniProtKB-KW"/>
</dbReference>
<dbReference type="GO" id="GO:0018896">
    <property type="term" value="P:dibenzothiophene catabolic process"/>
    <property type="evidence" value="ECO:0007669"/>
    <property type="project" value="UniProtKB-UniPathway"/>
</dbReference>
<dbReference type="GO" id="GO:0006552">
    <property type="term" value="P:L-leucine catabolic process"/>
    <property type="evidence" value="ECO:0007669"/>
    <property type="project" value="TreeGrafter"/>
</dbReference>
<dbReference type="CDD" id="cd01163">
    <property type="entry name" value="DszC"/>
    <property type="match status" value="1"/>
</dbReference>
<dbReference type="Gene3D" id="1.10.540.10">
    <property type="entry name" value="Acyl-CoA dehydrogenase/oxidase, N-terminal domain"/>
    <property type="match status" value="1"/>
</dbReference>
<dbReference type="Gene3D" id="2.40.110.10">
    <property type="entry name" value="Butyryl-CoA Dehydrogenase, subunit A, domain 2"/>
    <property type="match status" value="1"/>
</dbReference>
<dbReference type="Gene3D" id="1.20.140.10">
    <property type="entry name" value="Butyryl-CoA Dehydrogenase, subunit A, domain 3"/>
    <property type="match status" value="1"/>
</dbReference>
<dbReference type="InterPro" id="IPR013107">
    <property type="entry name" value="Acyl-CoA_DH_C"/>
</dbReference>
<dbReference type="InterPro" id="IPR006091">
    <property type="entry name" value="Acyl-CoA_Oxase/DH_mid-dom"/>
</dbReference>
<dbReference type="InterPro" id="IPR046373">
    <property type="entry name" value="Acyl-CoA_Oxase/DH_mid-dom_sf"/>
</dbReference>
<dbReference type="InterPro" id="IPR036250">
    <property type="entry name" value="AcylCo_DH-like_C"/>
</dbReference>
<dbReference type="InterPro" id="IPR013786">
    <property type="entry name" value="AcylCoA_DH/ox_N"/>
</dbReference>
<dbReference type="InterPro" id="IPR037069">
    <property type="entry name" value="AcylCoA_DH/ox_N_sf"/>
</dbReference>
<dbReference type="InterPro" id="IPR009100">
    <property type="entry name" value="AcylCoA_DH/oxidase_NM_dom_sf"/>
</dbReference>
<dbReference type="InterPro" id="IPR049992">
    <property type="entry name" value="DszC"/>
</dbReference>
<dbReference type="NCBIfam" id="NF043015">
    <property type="entry name" value="DibenthMonoxDszC"/>
    <property type="match status" value="1"/>
</dbReference>
<dbReference type="PANTHER" id="PTHR43884">
    <property type="entry name" value="ACYL-COA DEHYDROGENASE"/>
    <property type="match status" value="1"/>
</dbReference>
<dbReference type="PANTHER" id="PTHR43884:SF12">
    <property type="entry name" value="ISOVALERYL-COA DEHYDROGENASE, MITOCHONDRIAL-RELATED"/>
    <property type="match status" value="1"/>
</dbReference>
<dbReference type="Pfam" id="PF08028">
    <property type="entry name" value="Acyl-CoA_dh_2"/>
    <property type="match status" value="1"/>
</dbReference>
<dbReference type="Pfam" id="PF02770">
    <property type="entry name" value="Acyl-CoA_dh_M"/>
    <property type="match status" value="1"/>
</dbReference>
<dbReference type="Pfam" id="PF02771">
    <property type="entry name" value="Acyl-CoA_dh_N"/>
    <property type="match status" value="1"/>
</dbReference>
<dbReference type="PIRSF" id="PIRSF016578">
    <property type="entry name" value="HsaA"/>
    <property type="match status" value="1"/>
</dbReference>
<dbReference type="SUPFAM" id="SSF47203">
    <property type="entry name" value="Acyl-CoA dehydrogenase C-terminal domain-like"/>
    <property type="match status" value="1"/>
</dbReference>
<dbReference type="SUPFAM" id="SSF56645">
    <property type="entry name" value="Acyl-CoA dehydrogenase NM domain-like"/>
    <property type="match status" value="1"/>
</dbReference>
<gene>
    <name evidence="4" type="primary">dszC</name>
</gene>
<protein>
    <recommendedName>
        <fullName evidence="5">Dibenzothiophene monooxygenase</fullName>
        <shortName evidence="6">DBT monooxygenase</shortName>
        <shortName evidence="6">DBT-MO</shortName>
        <ecNumber evidence="3">1.14.14.21</ecNumber>
    </recommendedName>
    <alternativeName>
        <fullName evidence="4">Dibenzothiophene desulfurization enzyme C</fullName>
    </alternativeName>
</protein>
<proteinExistence type="evidence at protein level"/>
<keyword id="KW-0002">3D-structure</keyword>
<keyword id="KW-0963">Cytoplasm</keyword>
<keyword id="KW-0285">Flavoprotein</keyword>
<keyword id="KW-0288">FMN</keyword>
<keyword id="KW-0503">Monooxygenase</keyword>
<keyword id="KW-0547">Nucleotide-binding</keyword>
<keyword id="KW-0560">Oxidoreductase</keyword>
<accession>Q6WNP1</accession>
<comment type="function">
    <text evidence="7">Catalyzes the first step of the '4S' desulfurization pathway that removes covalently bound sulfur from dibenzothiophene (DBT) without breaking carbon-carbon bonds. Sulfur dioxygenase which converts DBT to DBT-sulfone (DBTO2 or DBT 5,5-dioxide) in a stepwise manner.</text>
</comment>
<comment type="catalytic activity">
    <reaction evidence="3">
        <text>dibenzothiophene + 2 FMNH2 + 2 O2 = dibenzothiophene 5,5-dioxide + 2 FMN + 2 H2O + 2 H(+)</text>
        <dbReference type="Rhea" id="RHEA:49072"/>
        <dbReference type="ChEBI" id="CHEBI:15377"/>
        <dbReference type="ChEBI" id="CHEBI:15378"/>
        <dbReference type="ChEBI" id="CHEBI:15379"/>
        <dbReference type="ChEBI" id="CHEBI:23681"/>
        <dbReference type="ChEBI" id="CHEBI:57618"/>
        <dbReference type="ChEBI" id="CHEBI:58210"/>
        <dbReference type="ChEBI" id="CHEBI:90356"/>
        <dbReference type="EC" id="1.14.14.21"/>
    </reaction>
</comment>
<comment type="catalytic activity">
    <reaction evidence="8">
        <text>dibenzothiophene + FMNH2 + O2 = dibenzothiophene 5-oxide + FMN + H2O + H(+)</text>
        <dbReference type="Rhea" id="RHEA:49076"/>
        <dbReference type="ChEBI" id="CHEBI:15377"/>
        <dbReference type="ChEBI" id="CHEBI:15378"/>
        <dbReference type="ChEBI" id="CHEBI:15379"/>
        <dbReference type="ChEBI" id="CHEBI:23681"/>
        <dbReference type="ChEBI" id="CHEBI:23683"/>
        <dbReference type="ChEBI" id="CHEBI:57618"/>
        <dbReference type="ChEBI" id="CHEBI:58210"/>
    </reaction>
</comment>
<comment type="catalytic activity">
    <reaction evidence="8">
        <text>dibenzothiophene 5-oxide + FMNH2 + O2 = dibenzothiophene 5,5-dioxide + FMN + H2O + H(+)</text>
        <dbReference type="Rhea" id="RHEA:49080"/>
        <dbReference type="ChEBI" id="CHEBI:15377"/>
        <dbReference type="ChEBI" id="CHEBI:15378"/>
        <dbReference type="ChEBI" id="CHEBI:15379"/>
        <dbReference type="ChEBI" id="CHEBI:23683"/>
        <dbReference type="ChEBI" id="CHEBI:57618"/>
        <dbReference type="ChEBI" id="CHEBI:58210"/>
        <dbReference type="ChEBI" id="CHEBI:90356"/>
    </reaction>
</comment>
<comment type="pathway">
    <text evidence="2">Sulfur metabolism; dibenzothiophene degradation.</text>
</comment>
<comment type="subunit">
    <text evidence="3">Homotetramer formed of a dimer of dimers.</text>
</comment>
<comment type="subcellular location">
    <subcellularLocation>
        <location evidence="6">Cytoplasm</location>
    </subcellularLocation>
</comment>
<comment type="domain">
    <text evidence="1 3 9">The lid loop assumes one of 2 conformations allowing opening and closing of the active site; in the 3D structure one dimer is open while the other is closed (PubMed:24470304). Another structure with FMN (3X0Y) proposes a different lid loop that may interact with the loop predicted here (By similarity).</text>
</comment>
<comment type="biotechnology">
    <text evidence="2">Can be used to remove sulfur from polycyclic aromatic sulfur compounds found in gasoline and diesel (biodesulfurization), which are a considerable source of pollution. As the substrates are not very soluble in conventional media, biphasic systems may help improve catalysis. Expression of dszD-dszA-dszB-dszC (cloned in this order) in organic-solvent-tolerant P.putida strain Idaho allows P.putida to grow on 10% p-xylene with DBT as the sole sulfur source. In this P.putida strain 97% of DBT was degraded, 71% of 4,6-dimethyldibenzothiophene and about 50% of 3-methyldibenzothiophene or 4-methyldibenzothiophene was degraded in the presence of 10% p-xylene. Degradation of DBT in the presence of 10% of other organic solvents was tested; when grown in dodecane, cyclohexane or heptanol bacteria metabolized DBT as well as p-xylene, while other organic solvents degraded DBT slightly less well.</text>
</comment>
<comment type="miscellaneous">
    <text evidence="8">Reduced flavin is provided by flavin reductase DszD.</text>
</comment>
<comment type="similarity">
    <text evidence="6">Belongs to the DszC flavin monooxygenase family.</text>
</comment>
<evidence type="ECO:0000250" key="1">
    <source>
        <dbReference type="UniProtKB" id="A0A0C6DRW4"/>
    </source>
</evidence>
<evidence type="ECO:0000269" key="2">
    <source>
    </source>
</evidence>
<evidence type="ECO:0000269" key="3">
    <source>
    </source>
</evidence>
<evidence type="ECO:0000303" key="4">
    <source>
    </source>
</evidence>
<evidence type="ECO:0000303" key="5">
    <source>
    </source>
</evidence>
<evidence type="ECO:0000305" key="6"/>
<evidence type="ECO:0000305" key="7">
    <source>
    </source>
</evidence>
<evidence type="ECO:0000305" key="8">
    <source>
    </source>
</evidence>
<evidence type="ECO:0007744" key="9">
    <source>
        <dbReference type="PDB" id="4DOY"/>
    </source>
</evidence>
<evidence type="ECO:0007829" key="10">
    <source>
        <dbReference type="PDB" id="4DOY"/>
    </source>
</evidence>
<reference key="1">
    <citation type="journal article" date="2006" name="Appl. Environ. Microbiol.">
        <title>Biodesulfurization in biphasic systems containing organic solvents.</title>
        <authorList>
            <person name="Tao F."/>
            <person name="Yu B."/>
            <person name="Xu P."/>
            <person name="Ma C.Q."/>
        </authorList>
    </citation>
    <scope>NUCLEOTIDE SEQUENCE [GENOMIC DNA]</scope>
    <scope>PROBABLE FUNCTION</scope>
    <scope>PATHWAY</scope>
    <scope>BIOTECHNOLOGY</scope>
    <source>
        <strain>XP</strain>
    </source>
</reference>
<reference evidence="9" key="2">
    <citation type="journal article" date="2014" name="Proteins">
        <title>Crystal structure of DszC from Rhodococcus sp. XP at 1.79 A.</title>
        <authorList>
            <person name="Liu S."/>
            <person name="Zhang C."/>
            <person name="Su T."/>
            <person name="Wei T."/>
            <person name="Zhu D."/>
            <person name="Wang K."/>
            <person name="Huang Y."/>
            <person name="Dong Y."/>
            <person name="Yin K."/>
            <person name="Xu S."/>
            <person name="Xu P."/>
            <person name="Gu L."/>
        </authorList>
    </citation>
    <scope>X-RAY CRYSTALLOGRAPHY (1.79 ANGSTROMS)</scope>
    <scope>FUNCTION</scope>
    <scope>CATALYTIC ACTIVITY</scope>
    <scope>SUBUNIT</scope>
    <scope>DOMAIN</scope>
    <scope>MUTAGENESIS OF HIS-92; TYR-96; ASN-129; PHE-161; SER-163; TRP-205; ARG-282; ARG-370; HIS-388; HIS-391 AND ASP-392</scope>
    <source>
        <strain>XP</strain>
    </source>
</reference>
<sequence>MTLSPEKQHVRPRDAADNDPVAVARGLAEKWRATAVERDRAGGSATAEREDLRASGLLSLLVPREYGGWGADWPTAIEVVREIAAADGSLGHLFGYHLTNAPMIELIGSQEQEEHLYTQIAQNNWWTGNASSENNSHVLDWKVSATPTEDGGYVLNGTKHFCSGAKGSDLLFVFGVVQDDSPQQGAIIAAAIPTSRAGVTPNDDWAAIGMRQTDSGSTDFHNVKVEPDEVLGAPNAFVLAFIQSERGSLFAPIAQLIFANVYLGIAHGALDAAREYTRTQARPWTPAGIQQATEDPYTIRSYGEFTIALQGADAAAREAAHLLQTVWDKGDALTPEDRGELMVKVSGVKALATNAALNISSGVFEVIGARGTHPRYGFDRFWRNVRTHSLHDPVSYKIADVGKHTLNGQYPIPGFTS</sequence>
<feature type="chain" id="PRO_0000455399" description="Dibenzothiophene monooxygenase">
    <location>
        <begin position="1"/>
        <end position="417"/>
    </location>
</feature>
<feature type="region of interest" description="First lid loop" evidence="1">
    <location>
        <begin position="131"/>
        <end position="142"/>
    </location>
</feature>
<feature type="region of interest" description="Second lid loop" evidence="3">
    <location>
        <begin position="280"/>
        <end position="295"/>
    </location>
</feature>
<feature type="binding site" evidence="8">
    <location>
        <position position="92"/>
    </location>
    <ligand>
        <name>dibenzothiophene</name>
        <dbReference type="ChEBI" id="CHEBI:23681"/>
    </ligand>
</feature>
<feature type="binding site" evidence="1 8">
    <location>
        <position position="96"/>
    </location>
    <ligand>
        <name>FMN</name>
        <dbReference type="ChEBI" id="CHEBI:58210"/>
    </ligand>
</feature>
<feature type="binding site" evidence="1">
    <location>
        <begin position="129"/>
        <end position="134"/>
    </location>
    <ligand>
        <name>FMN</name>
        <dbReference type="ChEBI" id="CHEBI:58210"/>
    </ligand>
</feature>
<feature type="binding site" evidence="8">
    <location>
        <position position="129"/>
    </location>
    <ligand>
        <name>dibenzothiophene</name>
        <dbReference type="ChEBI" id="CHEBI:23681"/>
    </ligand>
</feature>
<feature type="binding site" evidence="1 8">
    <location>
        <begin position="159"/>
        <end position="163"/>
    </location>
    <ligand>
        <name>FMN</name>
        <dbReference type="ChEBI" id="CHEBI:58210"/>
    </ligand>
</feature>
<feature type="binding site" evidence="8">
    <location>
        <position position="205"/>
    </location>
    <ligand>
        <name>dibenzothiophene</name>
        <dbReference type="ChEBI" id="CHEBI:23681"/>
    </ligand>
</feature>
<feature type="binding site" evidence="1 8">
    <location>
        <position position="282"/>
    </location>
    <ligand>
        <name>FMN</name>
        <dbReference type="ChEBI" id="CHEBI:58210"/>
    </ligand>
</feature>
<feature type="binding site" evidence="1 8">
    <location>
        <begin position="369"/>
        <end position="370"/>
    </location>
    <ligand>
        <name>FMN</name>
        <dbReference type="ChEBI" id="CHEBI:58210"/>
    </ligand>
</feature>
<feature type="binding site" evidence="8">
    <location>
        <begin position="391"/>
        <end position="392"/>
    </location>
    <ligand>
        <name>FMN</name>
        <dbReference type="ChEBI" id="CHEBI:58210"/>
    </ligand>
</feature>
<feature type="binding site" evidence="1">
    <location>
        <position position="391"/>
    </location>
    <ligand>
        <name>FMN</name>
        <dbReference type="ChEBI" id="CHEBI:58210"/>
    </ligand>
</feature>
<feature type="mutagenesis site" description="No production of DBTO2 from DBT." evidence="3">
    <original>H</original>
    <variation>F</variation>
    <location>
        <position position="92"/>
    </location>
</feature>
<feature type="mutagenesis site" description="No production of DBTO2 from DBT." evidence="3">
    <original>Y</original>
    <variation>A</variation>
    <location>
        <position position="96"/>
    </location>
</feature>
<feature type="mutagenesis site" description="Almost no production of DBTO2 from DBT." evidence="3">
    <original>N</original>
    <variation>A</variation>
    <location>
        <position position="129"/>
    </location>
</feature>
<feature type="mutagenesis site" description="No production of DBTO2 from DBT." evidence="3">
    <original>F</original>
    <variation>A</variation>
    <location>
        <position position="161"/>
    </location>
</feature>
<feature type="mutagenesis site" description="No production of DBTO2 from DBT." evidence="3">
    <original>S</original>
    <variation>A</variation>
    <location>
        <position position="163"/>
    </location>
</feature>
<feature type="mutagenesis site" description="No production of DBTO2 from DBT." evidence="3">
    <original>W</original>
    <variation>A</variation>
    <location>
        <position position="205"/>
    </location>
</feature>
<feature type="mutagenesis site" description="Almost no production of DBTO2 from DBT." evidence="3">
    <original>R</original>
    <variation>A</variation>
    <location>
        <position position="282"/>
    </location>
</feature>
<feature type="mutagenesis site" description="Almost no production of DBTO2 from DBT." evidence="3">
    <original>R</original>
    <variation>A</variation>
    <location>
        <position position="370"/>
    </location>
</feature>
<feature type="mutagenesis site" description="Very little production of DBTO2 from DBT." evidence="3">
    <original>H</original>
    <variation>F</variation>
    <location>
        <position position="388"/>
    </location>
</feature>
<feature type="mutagenesis site" description="Very little production of DBTO2 from DBT." evidence="3">
    <original>H</original>
    <variation>F</variation>
    <location>
        <position position="391"/>
    </location>
</feature>
<feature type="mutagenesis site" description="Very little production of DBTO2 from DBT." evidence="3">
    <original>D</original>
    <variation>N</variation>
    <location>
        <position position="392"/>
    </location>
</feature>
<feature type="helix" evidence="10">
    <location>
        <begin position="20"/>
        <end position="32"/>
    </location>
</feature>
<feature type="helix" evidence="10">
    <location>
        <begin position="35"/>
        <end position="41"/>
    </location>
</feature>
<feature type="helix" evidence="10">
    <location>
        <begin position="46"/>
        <end position="55"/>
    </location>
</feature>
<feature type="helix" evidence="10">
    <location>
        <begin position="57"/>
        <end position="59"/>
    </location>
</feature>
<feature type="helix" evidence="10">
    <location>
        <begin position="64"/>
        <end position="66"/>
    </location>
</feature>
<feature type="helix" evidence="10">
    <location>
        <begin position="73"/>
        <end position="86"/>
    </location>
</feature>
<feature type="helix" evidence="10">
    <location>
        <begin position="88"/>
        <end position="100"/>
    </location>
</feature>
<feature type="helix" evidence="10">
    <location>
        <begin position="102"/>
        <end position="107"/>
    </location>
</feature>
<feature type="helix" evidence="10">
    <location>
        <begin position="110"/>
        <end position="123"/>
    </location>
</feature>
<feature type="strand" evidence="10">
    <location>
        <begin position="127"/>
        <end position="130"/>
    </location>
</feature>
<feature type="helix" evidence="10">
    <location>
        <begin position="138"/>
        <end position="140"/>
    </location>
</feature>
<feature type="strand" evidence="10">
    <location>
        <begin position="144"/>
        <end position="147"/>
    </location>
</feature>
<feature type="strand" evidence="10">
    <location>
        <begin position="153"/>
        <end position="161"/>
    </location>
</feature>
<feature type="strand" evidence="10">
    <location>
        <begin position="169"/>
        <end position="176"/>
    </location>
</feature>
<feature type="strand" evidence="10">
    <location>
        <begin position="179"/>
        <end position="181"/>
    </location>
</feature>
<feature type="turn" evidence="10">
    <location>
        <begin position="182"/>
        <end position="185"/>
    </location>
</feature>
<feature type="strand" evidence="10">
    <location>
        <begin position="187"/>
        <end position="193"/>
    </location>
</feature>
<feature type="strand" evidence="10">
    <location>
        <begin position="199"/>
        <end position="201"/>
    </location>
</feature>
<feature type="strand" evidence="10">
    <location>
        <begin position="218"/>
        <end position="225"/>
    </location>
</feature>
<feature type="helix" evidence="10">
    <location>
        <begin position="227"/>
        <end position="229"/>
    </location>
</feature>
<feature type="helix" evidence="10">
    <location>
        <begin position="236"/>
        <end position="243"/>
    </location>
</feature>
<feature type="helix" evidence="10">
    <location>
        <begin position="246"/>
        <end position="249"/>
    </location>
</feature>
<feature type="helix" evidence="10">
    <location>
        <begin position="250"/>
        <end position="279"/>
    </location>
</feature>
<feature type="helix" evidence="10">
    <location>
        <begin position="285"/>
        <end position="287"/>
    </location>
</feature>
<feature type="helix" evidence="10">
    <location>
        <begin position="292"/>
        <end position="294"/>
    </location>
</feature>
<feature type="helix" evidence="10">
    <location>
        <begin position="296"/>
        <end position="328"/>
    </location>
</feature>
<feature type="helix" evidence="10">
    <location>
        <begin position="329"/>
        <end position="332"/>
    </location>
</feature>
<feature type="helix" evidence="10">
    <location>
        <begin position="335"/>
        <end position="367"/>
    </location>
</feature>
<feature type="helix" evidence="10">
    <location>
        <begin position="369"/>
        <end position="372"/>
    </location>
</feature>
<feature type="helix" evidence="10">
    <location>
        <begin position="374"/>
        <end position="376"/>
    </location>
</feature>
<feature type="helix" evidence="10">
    <location>
        <begin position="380"/>
        <end position="388"/>
    </location>
</feature>
<feature type="helix" evidence="10">
    <location>
        <begin position="394"/>
        <end position="407"/>
    </location>
</feature>
<organism>
    <name type="scientific">Rhodococcus erythropolis (strain XP)</name>
    <dbReference type="NCBI Taxonomy" id="1078016"/>
    <lineage>
        <taxon>Bacteria</taxon>
        <taxon>Bacillati</taxon>
        <taxon>Actinomycetota</taxon>
        <taxon>Actinomycetes</taxon>
        <taxon>Mycobacteriales</taxon>
        <taxon>Nocardiaceae</taxon>
        <taxon>Rhodococcus</taxon>
        <taxon>Rhodococcus erythropolis group</taxon>
    </lineage>
</organism>